<comment type="function">
    <text evidence="1">Is the main repressor of the genes involved in the de novo synthesis of purine nucleotides, regulating purB, purC, purEK, purF, purHD, purL, purMN and guaBA expression. PurR is allosterically activated to bind its cognate DNA by binding the purine corepressors, hypoxanthine or guanine, thereby effecting transcription repression.</text>
</comment>
<comment type="pathway">
    <text>Purine metabolism; purine nucleotide biosynthesis [regulation].</text>
</comment>
<comment type="subunit">
    <text evidence="1">Homodimer.</text>
</comment>
<comment type="domain">
    <text evidence="1">Consists of two structural and functional domains: an N-terminal DNA-binding domain, approximately the first 60 residues, and a larger C-terminal domain, approximately 280 residues, which imparts the function of corepressor binding and oligomerization.</text>
</comment>
<sequence length="341" mass="38175">MATIKDVAKRANVSTTTVSHVINKTRFVAEETRNAVWAAIKELHYSPSAVARSLKVNHTKSIGLLATSSEAAYFAEIIEAVEKNCFQKGYTLILGNAWNNLEKQRAYLSMMAQKRVDGLLVMCSEYPEPLLAMLEEYRHIPMVVMDWGEAKADFTDAVIDNAFEGGYMAGRYLIERGHREIGVIPGPLERNTGAGRLAGFMKAMEEAMIKVPESWIVQGDFEPESGYRAMQQILSQPHRPTAVFCGGDIMAMGALCAADEMGLRVPQDVSLIGYDNVRNARYFTPALTTIHQPKDSLGETAFNMLLDRIVNKREEPQSIEVHPRLIERRSVADGPFRDYRR</sequence>
<reference key="1">
    <citation type="journal article" date="2009" name="PLoS Genet.">
        <title>Organised genome dynamics in the Escherichia coli species results in highly diverse adaptive paths.</title>
        <authorList>
            <person name="Touchon M."/>
            <person name="Hoede C."/>
            <person name="Tenaillon O."/>
            <person name="Barbe V."/>
            <person name="Baeriswyl S."/>
            <person name="Bidet P."/>
            <person name="Bingen E."/>
            <person name="Bonacorsi S."/>
            <person name="Bouchier C."/>
            <person name="Bouvet O."/>
            <person name="Calteau A."/>
            <person name="Chiapello H."/>
            <person name="Clermont O."/>
            <person name="Cruveiller S."/>
            <person name="Danchin A."/>
            <person name="Diard M."/>
            <person name="Dossat C."/>
            <person name="Karoui M.E."/>
            <person name="Frapy E."/>
            <person name="Garry L."/>
            <person name="Ghigo J.M."/>
            <person name="Gilles A.M."/>
            <person name="Johnson J."/>
            <person name="Le Bouguenec C."/>
            <person name="Lescat M."/>
            <person name="Mangenot S."/>
            <person name="Martinez-Jehanne V."/>
            <person name="Matic I."/>
            <person name="Nassif X."/>
            <person name="Oztas S."/>
            <person name="Petit M.A."/>
            <person name="Pichon C."/>
            <person name="Rouy Z."/>
            <person name="Ruf C.S."/>
            <person name="Schneider D."/>
            <person name="Tourret J."/>
            <person name="Vacherie B."/>
            <person name="Vallenet D."/>
            <person name="Medigue C."/>
            <person name="Rocha E.P.C."/>
            <person name="Denamur E."/>
        </authorList>
    </citation>
    <scope>NUCLEOTIDE SEQUENCE [LARGE SCALE GENOMIC DNA]</scope>
    <source>
        <strain>UMN026 / ExPEC</strain>
    </source>
</reference>
<organism>
    <name type="scientific">Escherichia coli O17:K52:H18 (strain UMN026 / ExPEC)</name>
    <dbReference type="NCBI Taxonomy" id="585056"/>
    <lineage>
        <taxon>Bacteria</taxon>
        <taxon>Pseudomonadati</taxon>
        <taxon>Pseudomonadota</taxon>
        <taxon>Gammaproteobacteria</taxon>
        <taxon>Enterobacterales</taxon>
        <taxon>Enterobacteriaceae</taxon>
        <taxon>Escherichia</taxon>
    </lineage>
</organism>
<feature type="chain" id="PRO_1000140290" description="HTH-type transcriptional repressor PurR">
    <location>
        <begin position="1"/>
        <end position="341"/>
    </location>
</feature>
<feature type="domain" description="HTH lacI-type" evidence="1">
    <location>
        <begin position="2"/>
        <end position="56"/>
    </location>
</feature>
<feature type="DNA-binding region" description="H-T-H motif" evidence="1">
    <location>
        <begin position="4"/>
        <end position="23"/>
    </location>
</feature>
<feature type="DNA-binding region" evidence="1">
    <location>
        <begin position="48"/>
        <end position="56"/>
    </location>
</feature>
<feature type="binding site" evidence="1">
    <location>
        <position position="73"/>
    </location>
    <ligand>
        <name>hypoxanthine</name>
        <dbReference type="ChEBI" id="CHEBI:17368"/>
    </ligand>
</feature>
<feature type="binding site" evidence="1">
    <location>
        <position position="190"/>
    </location>
    <ligand>
        <name>hypoxanthine</name>
        <dbReference type="ChEBI" id="CHEBI:17368"/>
    </ligand>
</feature>
<feature type="binding site" evidence="1">
    <location>
        <position position="192"/>
    </location>
    <ligand>
        <name>hypoxanthine</name>
        <dbReference type="ChEBI" id="CHEBI:17368"/>
    </ligand>
</feature>
<feature type="binding site" evidence="1">
    <location>
        <position position="221"/>
    </location>
    <ligand>
        <name>hypoxanthine</name>
        <dbReference type="ChEBI" id="CHEBI:17368"/>
    </ligand>
</feature>
<feature type="binding site" evidence="1">
    <location>
        <position position="275"/>
    </location>
    <ligand>
        <name>hypoxanthine</name>
        <dbReference type="ChEBI" id="CHEBI:17368"/>
    </ligand>
</feature>
<dbReference type="EMBL" id="CU928163">
    <property type="protein sequence ID" value="CAR13145.1"/>
    <property type="molecule type" value="Genomic_DNA"/>
</dbReference>
<dbReference type="RefSeq" id="WP_000190982.1">
    <property type="nucleotide sequence ID" value="NC_011751.1"/>
</dbReference>
<dbReference type="RefSeq" id="YP_002412677.1">
    <property type="nucleotide sequence ID" value="NC_011751.1"/>
</dbReference>
<dbReference type="SMR" id="B7NBB1"/>
<dbReference type="STRING" id="585056.ECUMN_1948"/>
<dbReference type="GeneID" id="75204504"/>
<dbReference type="KEGG" id="eum:ECUMN_1948"/>
<dbReference type="PATRIC" id="fig|585056.7.peg.2135"/>
<dbReference type="HOGENOM" id="CLU_037628_6_2_6"/>
<dbReference type="UniPathway" id="UPA00488"/>
<dbReference type="Proteomes" id="UP000007097">
    <property type="component" value="Chromosome"/>
</dbReference>
<dbReference type="GO" id="GO:0003700">
    <property type="term" value="F:DNA-binding transcription factor activity"/>
    <property type="evidence" value="ECO:0007669"/>
    <property type="project" value="TreeGrafter"/>
</dbReference>
<dbReference type="GO" id="GO:0000976">
    <property type="term" value="F:transcription cis-regulatory region binding"/>
    <property type="evidence" value="ECO:0007669"/>
    <property type="project" value="TreeGrafter"/>
</dbReference>
<dbReference type="GO" id="GO:0045892">
    <property type="term" value="P:negative regulation of DNA-templated transcription"/>
    <property type="evidence" value="ECO:0007669"/>
    <property type="project" value="UniProtKB-UniRule"/>
</dbReference>
<dbReference type="GO" id="GO:0006164">
    <property type="term" value="P:purine nucleotide biosynthetic process"/>
    <property type="evidence" value="ECO:0007669"/>
    <property type="project" value="UniProtKB-UniPathway"/>
</dbReference>
<dbReference type="CDD" id="cd01392">
    <property type="entry name" value="HTH_LacI"/>
    <property type="match status" value="1"/>
</dbReference>
<dbReference type="CDD" id="cd06275">
    <property type="entry name" value="PBP1_PurR"/>
    <property type="match status" value="1"/>
</dbReference>
<dbReference type="FunFam" id="1.10.260.40:FF:000002">
    <property type="entry name" value="HTH-type transcriptional repressor PurR"/>
    <property type="match status" value="1"/>
</dbReference>
<dbReference type="FunFam" id="3.40.50.2300:FF:000045">
    <property type="entry name" value="HTH-type transcriptional repressor PurR"/>
    <property type="match status" value="1"/>
</dbReference>
<dbReference type="Gene3D" id="3.40.50.2300">
    <property type="match status" value="2"/>
</dbReference>
<dbReference type="Gene3D" id="1.10.260.40">
    <property type="entry name" value="lambda repressor-like DNA-binding domains"/>
    <property type="match status" value="1"/>
</dbReference>
<dbReference type="HAMAP" id="MF_01277">
    <property type="entry name" value="HTH_type_PurR"/>
    <property type="match status" value="1"/>
</dbReference>
<dbReference type="InterPro" id="IPR000843">
    <property type="entry name" value="HTH_LacI"/>
</dbReference>
<dbReference type="InterPro" id="IPR046335">
    <property type="entry name" value="LacI/GalR-like_sensor"/>
</dbReference>
<dbReference type="InterPro" id="IPR010982">
    <property type="entry name" value="Lambda_DNA-bd_dom_sf"/>
</dbReference>
<dbReference type="InterPro" id="IPR028082">
    <property type="entry name" value="Peripla_BP_I"/>
</dbReference>
<dbReference type="InterPro" id="IPR023588">
    <property type="entry name" value="Tscrpt_reg_HTH_PurR"/>
</dbReference>
<dbReference type="NCBIfam" id="NF007979">
    <property type="entry name" value="PRK10703.1"/>
    <property type="match status" value="1"/>
</dbReference>
<dbReference type="PANTHER" id="PTHR30146:SF148">
    <property type="entry name" value="HTH-TYPE TRANSCRIPTIONAL REPRESSOR PURR-RELATED"/>
    <property type="match status" value="1"/>
</dbReference>
<dbReference type="PANTHER" id="PTHR30146">
    <property type="entry name" value="LACI-RELATED TRANSCRIPTIONAL REPRESSOR"/>
    <property type="match status" value="1"/>
</dbReference>
<dbReference type="Pfam" id="PF00356">
    <property type="entry name" value="LacI"/>
    <property type="match status" value="1"/>
</dbReference>
<dbReference type="Pfam" id="PF13377">
    <property type="entry name" value="Peripla_BP_3"/>
    <property type="match status" value="1"/>
</dbReference>
<dbReference type="PRINTS" id="PR00036">
    <property type="entry name" value="HTHLACI"/>
</dbReference>
<dbReference type="SMART" id="SM00354">
    <property type="entry name" value="HTH_LACI"/>
    <property type="match status" value="1"/>
</dbReference>
<dbReference type="SUPFAM" id="SSF47413">
    <property type="entry name" value="lambda repressor-like DNA-binding domains"/>
    <property type="match status" value="1"/>
</dbReference>
<dbReference type="SUPFAM" id="SSF53822">
    <property type="entry name" value="Periplasmic binding protein-like I"/>
    <property type="match status" value="1"/>
</dbReference>
<dbReference type="PROSITE" id="PS00356">
    <property type="entry name" value="HTH_LACI_1"/>
    <property type="match status" value="1"/>
</dbReference>
<dbReference type="PROSITE" id="PS50932">
    <property type="entry name" value="HTH_LACI_2"/>
    <property type="match status" value="1"/>
</dbReference>
<evidence type="ECO:0000255" key="1">
    <source>
        <dbReference type="HAMAP-Rule" id="MF_01277"/>
    </source>
</evidence>
<proteinExistence type="inferred from homology"/>
<protein>
    <recommendedName>
        <fullName evidence="1">HTH-type transcriptional repressor PurR</fullName>
    </recommendedName>
    <alternativeName>
        <fullName evidence="1">Pur regulon repressor</fullName>
    </alternativeName>
    <alternativeName>
        <fullName evidence="1">Purine nucleotide synthesis repressor</fullName>
    </alternativeName>
</protein>
<name>PURR_ECOLU</name>
<accession>B7NBB1</accession>
<gene>
    <name evidence="1" type="primary">purR</name>
    <name type="ordered locus">ECUMN_1948</name>
</gene>
<keyword id="KW-0238">DNA-binding</keyword>
<keyword id="KW-0658">Purine biosynthesis</keyword>
<keyword id="KW-0678">Repressor</keyword>
<keyword id="KW-0804">Transcription</keyword>
<keyword id="KW-0805">Transcription regulation</keyword>